<name>HSLV_BAUCH</name>
<gene>
    <name evidence="1" type="primary">hslV</name>
    <name type="ordered locus">BCI_0167</name>
</gene>
<sequence>MTTIISVRRNGHVVIGGDGQATIGNTIMKGNVRKVRRLYYNDKVIAGFAGGTADAFTLFELFERKLESYQGHLVKAAVELAKDWRTDRRLRRLEALLAVADENASLIITGNGDVIQPEKDLIAIGSGGPYAQSAARALLENTNFSAREIVKKSLVIAGDICIYTNQFHTIEELTSTAEGY</sequence>
<reference key="1">
    <citation type="journal article" date="2006" name="PLoS Biol.">
        <title>Metabolic complementarity and genomics of the dual bacterial symbiosis of sharpshooters.</title>
        <authorList>
            <person name="Wu D."/>
            <person name="Daugherty S.C."/>
            <person name="Van Aken S.E."/>
            <person name="Pai G.H."/>
            <person name="Watkins K.L."/>
            <person name="Khouri H."/>
            <person name="Tallon L.J."/>
            <person name="Zaborsky J.M."/>
            <person name="Dunbar H.E."/>
            <person name="Tran P.L."/>
            <person name="Moran N.A."/>
            <person name="Eisen J.A."/>
        </authorList>
    </citation>
    <scope>NUCLEOTIDE SEQUENCE [LARGE SCALE GENOMIC DNA]</scope>
</reference>
<proteinExistence type="inferred from homology"/>
<accession>Q1LTT6</accession>
<keyword id="KW-0021">Allosteric enzyme</keyword>
<keyword id="KW-0963">Cytoplasm</keyword>
<keyword id="KW-0378">Hydrolase</keyword>
<keyword id="KW-0479">Metal-binding</keyword>
<keyword id="KW-0645">Protease</keyword>
<keyword id="KW-1185">Reference proteome</keyword>
<keyword id="KW-0915">Sodium</keyword>
<keyword id="KW-0888">Threonine protease</keyword>
<dbReference type="EC" id="3.4.25.2" evidence="1"/>
<dbReference type="EMBL" id="CP000238">
    <property type="protein sequence ID" value="ABF14308.1"/>
    <property type="molecule type" value="Genomic_DNA"/>
</dbReference>
<dbReference type="RefSeq" id="WP_011520361.1">
    <property type="nucleotide sequence ID" value="NC_007984.1"/>
</dbReference>
<dbReference type="SMR" id="Q1LTT6"/>
<dbReference type="STRING" id="374463.BCI_0167"/>
<dbReference type="MEROPS" id="T01.006"/>
<dbReference type="KEGG" id="bci:BCI_0167"/>
<dbReference type="HOGENOM" id="CLU_093872_1_0_6"/>
<dbReference type="OrthoDB" id="9804884at2"/>
<dbReference type="Proteomes" id="UP000002427">
    <property type="component" value="Chromosome"/>
</dbReference>
<dbReference type="GO" id="GO:0009376">
    <property type="term" value="C:HslUV protease complex"/>
    <property type="evidence" value="ECO:0007669"/>
    <property type="project" value="UniProtKB-UniRule"/>
</dbReference>
<dbReference type="GO" id="GO:0005839">
    <property type="term" value="C:proteasome core complex"/>
    <property type="evidence" value="ECO:0007669"/>
    <property type="project" value="InterPro"/>
</dbReference>
<dbReference type="GO" id="GO:0046872">
    <property type="term" value="F:metal ion binding"/>
    <property type="evidence" value="ECO:0007669"/>
    <property type="project" value="UniProtKB-KW"/>
</dbReference>
<dbReference type="GO" id="GO:0004298">
    <property type="term" value="F:threonine-type endopeptidase activity"/>
    <property type="evidence" value="ECO:0007669"/>
    <property type="project" value="UniProtKB-KW"/>
</dbReference>
<dbReference type="GO" id="GO:0051603">
    <property type="term" value="P:proteolysis involved in protein catabolic process"/>
    <property type="evidence" value="ECO:0007669"/>
    <property type="project" value="InterPro"/>
</dbReference>
<dbReference type="CDD" id="cd01913">
    <property type="entry name" value="protease_HslV"/>
    <property type="match status" value="1"/>
</dbReference>
<dbReference type="FunFam" id="3.60.20.10:FF:000002">
    <property type="entry name" value="ATP-dependent protease subunit HslV"/>
    <property type="match status" value="1"/>
</dbReference>
<dbReference type="Gene3D" id="3.60.20.10">
    <property type="entry name" value="Glutamine Phosphoribosylpyrophosphate, subunit 1, domain 1"/>
    <property type="match status" value="1"/>
</dbReference>
<dbReference type="HAMAP" id="MF_00248">
    <property type="entry name" value="HslV"/>
    <property type="match status" value="1"/>
</dbReference>
<dbReference type="InterPro" id="IPR022281">
    <property type="entry name" value="ATP-dep_Prtase_HsIV_su"/>
</dbReference>
<dbReference type="InterPro" id="IPR029055">
    <property type="entry name" value="Ntn_hydrolases_N"/>
</dbReference>
<dbReference type="InterPro" id="IPR001353">
    <property type="entry name" value="Proteasome_sua/b"/>
</dbReference>
<dbReference type="InterPro" id="IPR023333">
    <property type="entry name" value="Proteasome_suB-type"/>
</dbReference>
<dbReference type="NCBIfam" id="TIGR03692">
    <property type="entry name" value="ATP_dep_HslV"/>
    <property type="match status" value="1"/>
</dbReference>
<dbReference type="NCBIfam" id="NF003964">
    <property type="entry name" value="PRK05456.1"/>
    <property type="match status" value="1"/>
</dbReference>
<dbReference type="PANTHER" id="PTHR32194:SF0">
    <property type="entry name" value="ATP-DEPENDENT PROTEASE SUBUNIT HSLV"/>
    <property type="match status" value="1"/>
</dbReference>
<dbReference type="PANTHER" id="PTHR32194">
    <property type="entry name" value="METALLOPROTEASE TLDD"/>
    <property type="match status" value="1"/>
</dbReference>
<dbReference type="Pfam" id="PF00227">
    <property type="entry name" value="Proteasome"/>
    <property type="match status" value="1"/>
</dbReference>
<dbReference type="PIRSF" id="PIRSF039093">
    <property type="entry name" value="HslV"/>
    <property type="match status" value="1"/>
</dbReference>
<dbReference type="SUPFAM" id="SSF56235">
    <property type="entry name" value="N-terminal nucleophile aminohydrolases (Ntn hydrolases)"/>
    <property type="match status" value="1"/>
</dbReference>
<dbReference type="PROSITE" id="PS51476">
    <property type="entry name" value="PROTEASOME_BETA_2"/>
    <property type="match status" value="1"/>
</dbReference>
<feature type="chain" id="PRO_1000012580" description="ATP-dependent protease subunit HslV">
    <location>
        <begin position="1"/>
        <end position="180"/>
    </location>
</feature>
<feature type="active site" evidence="1">
    <location>
        <position position="2"/>
    </location>
</feature>
<feature type="binding site" evidence="1">
    <location>
        <position position="158"/>
    </location>
    <ligand>
        <name>Na(+)</name>
        <dbReference type="ChEBI" id="CHEBI:29101"/>
    </ligand>
</feature>
<feature type="binding site" evidence="1">
    <location>
        <position position="161"/>
    </location>
    <ligand>
        <name>Na(+)</name>
        <dbReference type="ChEBI" id="CHEBI:29101"/>
    </ligand>
</feature>
<feature type="binding site" evidence="1">
    <location>
        <position position="164"/>
    </location>
    <ligand>
        <name>Na(+)</name>
        <dbReference type="ChEBI" id="CHEBI:29101"/>
    </ligand>
</feature>
<protein>
    <recommendedName>
        <fullName evidence="1">ATP-dependent protease subunit HslV</fullName>
        <ecNumber evidence="1">3.4.25.2</ecNumber>
    </recommendedName>
</protein>
<evidence type="ECO:0000255" key="1">
    <source>
        <dbReference type="HAMAP-Rule" id="MF_00248"/>
    </source>
</evidence>
<comment type="function">
    <text evidence="1">Protease subunit of a proteasome-like degradation complex believed to be a general protein degrading machinery.</text>
</comment>
<comment type="catalytic activity">
    <reaction evidence="1">
        <text>ATP-dependent cleavage of peptide bonds with broad specificity.</text>
        <dbReference type="EC" id="3.4.25.2"/>
    </reaction>
</comment>
<comment type="activity regulation">
    <text evidence="1">Allosterically activated by HslU binding.</text>
</comment>
<comment type="subunit">
    <text evidence="1">A double ring-shaped homohexamer of HslV is capped on each side by a ring-shaped HslU homohexamer. The assembly of the HslU/HslV complex is dependent on binding of ATP.</text>
</comment>
<comment type="subcellular location">
    <subcellularLocation>
        <location evidence="1">Cytoplasm</location>
    </subcellularLocation>
</comment>
<comment type="similarity">
    <text evidence="1">Belongs to the peptidase T1B family. HslV subfamily.</text>
</comment>
<organism>
    <name type="scientific">Baumannia cicadellinicola subsp. Homalodisca coagulata</name>
    <dbReference type="NCBI Taxonomy" id="374463"/>
    <lineage>
        <taxon>Bacteria</taxon>
        <taxon>Pseudomonadati</taxon>
        <taxon>Pseudomonadota</taxon>
        <taxon>Gammaproteobacteria</taxon>
        <taxon>Candidatus Palibaumannia</taxon>
    </lineage>
</organism>